<gene>
    <name type="primary">ydeG</name>
    <name type="ordered locus">BSU05190</name>
</gene>
<accession>P96664</accession>
<accession>Q797I4</accession>
<sequence length="430" mass="44047">MMLDKDSVKAIDVQTASLQSYISSPEKQKSLYKRTLFVVSISQIFGGAGLAAGVTVGALIAQQMLGTDAFAGLPSALFTLGSAGSALIVGRLSQRYGRRTGLSAGFMIGGLGAIGVIMAAIINSIFLLFISLLIYGAGTATNLQARYAGTDLANHKQRATAVSITMVFTTFGAVAGPSLVNVMGDFALSIGVPSLAGPFILAAAAYMLAGVVLFIMLRPDPLVIARTIEAANEEPGDKGHLAATEHTENKKGIIVGATVMVLTQIVMVAIMTMTPVHMRHHGHDLGAVGLVIGFHIGAMYLPSLVTGVLVDRLGRTAMAISSGTTLLLAGVIAAFAPGESMILLVIALSLLGLGWNFGLISGTALIVDSTDTATRAKTQGTVDVLIALSGAAGGALSGMIVAGSSYLALSLIGGILSLLLIPVVVWSRGR</sequence>
<evidence type="ECO:0000255" key="1"/>
<evidence type="ECO:0000305" key="2"/>
<comment type="subcellular location">
    <subcellularLocation>
        <location evidence="2">Cell membrane</location>
        <topology evidence="2">Multi-pass membrane protein</topology>
    </subcellularLocation>
</comment>
<comment type="similarity">
    <text evidence="2">Belongs to the major facilitator superfamily.</text>
</comment>
<protein>
    <recommendedName>
        <fullName>Uncharacterized MFS-type transporter YdeG</fullName>
    </recommendedName>
</protein>
<feature type="chain" id="PRO_0000359520" description="Uncharacterized MFS-type transporter YdeG">
    <location>
        <begin position="1"/>
        <end position="430"/>
    </location>
</feature>
<feature type="transmembrane region" description="Helical" evidence="1">
    <location>
        <begin position="36"/>
        <end position="56"/>
    </location>
</feature>
<feature type="transmembrane region" description="Helical" evidence="1">
    <location>
        <begin position="69"/>
        <end position="89"/>
    </location>
</feature>
<feature type="transmembrane region" description="Helical" evidence="1">
    <location>
        <begin position="100"/>
        <end position="122"/>
    </location>
</feature>
<feature type="transmembrane region" description="Helical" evidence="1">
    <location>
        <begin position="126"/>
        <end position="148"/>
    </location>
</feature>
<feature type="transmembrane region" description="Helical" evidence="1">
    <location>
        <begin position="160"/>
        <end position="180"/>
    </location>
</feature>
<feature type="transmembrane region" description="Helical" evidence="1">
    <location>
        <begin position="197"/>
        <end position="217"/>
    </location>
</feature>
<feature type="transmembrane region" description="Helical" evidence="1">
    <location>
        <begin position="253"/>
        <end position="273"/>
    </location>
</feature>
<feature type="transmembrane region" description="Helical" evidence="1">
    <location>
        <begin position="285"/>
        <end position="305"/>
    </location>
</feature>
<feature type="transmembrane region" description="Helical" evidence="1">
    <location>
        <begin position="317"/>
        <end position="337"/>
    </location>
</feature>
<feature type="transmembrane region" description="Helical" evidence="1">
    <location>
        <begin position="340"/>
        <end position="360"/>
    </location>
</feature>
<feature type="transmembrane region" description="Helical" evidence="1">
    <location>
        <begin position="384"/>
        <end position="404"/>
    </location>
</feature>
<feature type="transmembrane region" description="Helical" evidence="1">
    <location>
        <begin position="406"/>
        <end position="426"/>
    </location>
</feature>
<keyword id="KW-1003">Cell membrane</keyword>
<keyword id="KW-0472">Membrane</keyword>
<keyword id="KW-1185">Reference proteome</keyword>
<keyword id="KW-0812">Transmembrane</keyword>
<keyword id="KW-1133">Transmembrane helix</keyword>
<keyword id="KW-0813">Transport</keyword>
<reference key="1">
    <citation type="submission" date="1997-03" db="EMBL/GenBank/DDBJ databases">
        <title>A 148 kbp sequence of the region between 35 and 47 degree of the Bacillus subtilis genome.</title>
        <authorList>
            <person name="Kasahara Y."/>
            <person name="Nakai S."/>
            <person name="Lee S."/>
            <person name="Sadaie Y."/>
            <person name="Ogasawara N."/>
        </authorList>
    </citation>
    <scope>NUCLEOTIDE SEQUENCE [GENOMIC DNA]</scope>
    <source>
        <strain>168</strain>
    </source>
</reference>
<reference key="2">
    <citation type="journal article" date="1997" name="Nature">
        <title>The complete genome sequence of the Gram-positive bacterium Bacillus subtilis.</title>
        <authorList>
            <person name="Kunst F."/>
            <person name="Ogasawara N."/>
            <person name="Moszer I."/>
            <person name="Albertini A.M."/>
            <person name="Alloni G."/>
            <person name="Azevedo V."/>
            <person name="Bertero M.G."/>
            <person name="Bessieres P."/>
            <person name="Bolotin A."/>
            <person name="Borchert S."/>
            <person name="Borriss R."/>
            <person name="Boursier L."/>
            <person name="Brans A."/>
            <person name="Braun M."/>
            <person name="Brignell S.C."/>
            <person name="Bron S."/>
            <person name="Brouillet S."/>
            <person name="Bruschi C.V."/>
            <person name="Caldwell B."/>
            <person name="Capuano V."/>
            <person name="Carter N.M."/>
            <person name="Choi S.-K."/>
            <person name="Codani J.-J."/>
            <person name="Connerton I.F."/>
            <person name="Cummings N.J."/>
            <person name="Daniel R.A."/>
            <person name="Denizot F."/>
            <person name="Devine K.M."/>
            <person name="Duesterhoeft A."/>
            <person name="Ehrlich S.D."/>
            <person name="Emmerson P.T."/>
            <person name="Entian K.-D."/>
            <person name="Errington J."/>
            <person name="Fabret C."/>
            <person name="Ferrari E."/>
            <person name="Foulger D."/>
            <person name="Fritz C."/>
            <person name="Fujita M."/>
            <person name="Fujita Y."/>
            <person name="Fuma S."/>
            <person name="Galizzi A."/>
            <person name="Galleron N."/>
            <person name="Ghim S.-Y."/>
            <person name="Glaser P."/>
            <person name="Goffeau A."/>
            <person name="Golightly E.J."/>
            <person name="Grandi G."/>
            <person name="Guiseppi G."/>
            <person name="Guy B.J."/>
            <person name="Haga K."/>
            <person name="Haiech J."/>
            <person name="Harwood C.R."/>
            <person name="Henaut A."/>
            <person name="Hilbert H."/>
            <person name="Holsappel S."/>
            <person name="Hosono S."/>
            <person name="Hullo M.-F."/>
            <person name="Itaya M."/>
            <person name="Jones L.-M."/>
            <person name="Joris B."/>
            <person name="Karamata D."/>
            <person name="Kasahara Y."/>
            <person name="Klaerr-Blanchard M."/>
            <person name="Klein C."/>
            <person name="Kobayashi Y."/>
            <person name="Koetter P."/>
            <person name="Koningstein G."/>
            <person name="Krogh S."/>
            <person name="Kumano M."/>
            <person name="Kurita K."/>
            <person name="Lapidus A."/>
            <person name="Lardinois S."/>
            <person name="Lauber J."/>
            <person name="Lazarevic V."/>
            <person name="Lee S.-M."/>
            <person name="Levine A."/>
            <person name="Liu H."/>
            <person name="Masuda S."/>
            <person name="Mauel C."/>
            <person name="Medigue C."/>
            <person name="Medina N."/>
            <person name="Mellado R.P."/>
            <person name="Mizuno M."/>
            <person name="Moestl D."/>
            <person name="Nakai S."/>
            <person name="Noback M."/>
            <person name="Noone D."/>
            <person name="O'Reilly M."/>
            <person name="Ogawa K."/>
            <person name="Ogiwara A."/>
            <person name="Oudega B."/>
            <person name="Park S.-H."/>
            <person name="Parro V."/>
            <person name="Pohl T.M."/>
            <person name="Portetelle D."/>
            <person name="Porwollik S."/>
            <person name="Prescott A.M."/>
            <person name="Presecan E."/>
            <person name="Pujic P."/>
            <person name="Purnelle B."/>
            <person name="Rapoport G."/>
            <person name="Rey M."/>
            <person name="Reynolds S."/>
            <person name="Rieger M."/>
            <person name="Rivolta C."/>
            <person name="Rocha E."/>
            <person name="Roche B."/>
            <person name="Rose M."/>
            <person name="Sadaie Y."/>
            <person name="Sato T."/>
            <person name="Scanlan E."/>
            <person name="Schleich S."/>
            <person name="Schroeter R."/>
            <person name="Scoffone F."/>
            <person name="Sekiguchi J."/>
            <person name="Sekowska A."/>
            <person name="Seror S.J."/>
            <person name="Serror P."/>
            <person name="Shin B.-S."/>
            <person name="Soldo B."/>
            <person name="Sorokin A."/>
            <person name="Tacconi E."/>
            <person name="Takagi T."/>
            <person name="Takahashi H."/>
            <person name="Takemaru K."/>
            <person name="Takeuchi M."/>
            <person name="Tamakoshi A."/>
            <person name="Tanaka T."/>
            <person name="Terpstra P."/>
            <person name="Tognoni A."/>
            <person name="Tosato V."/>
            <person name="Uchiyama S."/>
            <person name="Vandenbol M."/>
            <person name="Vannier F."/>
            <person name="Vassarotti A."/>
            <person name="Viari A."/>
            <person name="Wambutt R."/>
            <person name="Wedler E."/>
            <person name="Wedler H."/>
            <person name="Weitzenegger T."/>
            <person name="Winters P."/>
            <person name="Wipat A."/>
            <person name="Yamamoto H."/>
            <person name="Yamane K."/>
            <person name="Yasumoto K."/>
            <person name="Yata K."/>
            <person name="Yoshida K."/>
            <person name="Yoshikawa H.-F."/>
            <person name="Zumstein E."/>
            <person name="Yoshikawa H."/>
            <person name="Danchin A."/>
        </authorList>
    </citation>
    <scope>NUCLEOTIDE SEQUENCE [LARGE SCALE GENOMIC DNA]</scope>
    <source>
        <strain>168</strain>
    </source>
</reference>
<dbReference type="EMBL" id="AB001488">
    <property type="protein sequence ID" value="BAA19354.1"/>
    <property type="molecule type" value="Genomic_DNA"/>
</dbReference>
<dbReference type="EMBL" id="AL009126">
    <property type="protein sequence ID" value="CAB12326.1"/>
    <property type="molecule type" value="Genomic_DNA"/>
</dbReference>
<dbReference type="PIR" id="A69778">
    <property type="entry name" value="A69778"/>
</dbReference>
<dbReference type="RefSeq" id="NP_388400.1">
    <property type="nucleotide sequence ID" value="NC_000964.3"/>
</dbReference>
<dbReference type="RefSeq" id="WP_003234232.1">
    <property type="nucleotide sequence ID" value="NZ_OZ025638.1"/>
</dbReference>
<dbReference type="SMR" id="P96664"/>
<dbReference type="FunCoup" id="P96664">
    <property type="interactions" value="173"/>
</dbReference>
<dbReference type="STRING" id="224308.BSU05190"/>
<dbReference type="PaxDb" id="224308-BSU05190"/>
<dbReference type="EnsemblBacteria" id="CAB12326">
    <property type="protein sequence ID" value="CAB12326"/>
    <property type="gene ID" value="BSU_05190"/>
</dbReference>
<dbReference type="GeneID" id="938115"/>
<dbReference type="KEGG" id="bsu:BSU05190"/>
<dbReference type="PATRIC" id="fig|224308.179.peg.554"/>
<dbReference type="eggNOG" id="COG0477">
    <property type="taxonomic scope" value="Bacteria"/>
</dbReference>
<dbReference type="InParanoid" id="P96664"/>
<dbReference type="OrthoDB" id="9776171at2"/>
<dbReference type="PhylomeDB" id="P96664"/>
<dbReference type="BioCyc" id="BSUB:BSU05190-MONOMER"/>
<dbReference type="Proteomes" id="UP000001570">
    <property type="component" value="Chromosome"/>
</dbReference>
<dbReference type="GO" id="GO:0005886">
    <property type="term" value="C:plasma membrane"/>
    <property type="evidence" value="ECO:0007669"/>
    <property type="project" value="UniProtKB-SubCell"/>
</dbReference>
<dbReference type="GO" id="GO:0022857">
    <property type="term" value="F:transmembrane transporter activity"/>
    <property type="evidence" value="ECO:0007669"/>
    <property type="project" value="InterPro"/>
</dbReference>
<dbReference type="Gene3D" id="1.20.1250.20">
    <property type="entry name" value="MFS general substrate transporter like domains"/>
    <property type="match status" value="1"/>
</dbReference>
<dbReference type="InterPro" id="IPR011701">
    <property type="entry name" value="MFS"/>
</dbReference>
<dbReference type="InterPro" id="IPR020846">
    <property type="entry name" value="MFS_dom"/>
</dbReference>
<dbReference type="InterPro" id="IPR036259">
    <property type="entry name" value="MFS_trans_sf"/>
</dbReference>
<dbReference type="PANTHER" id="PTHR23534:SF1">
    <property type="entry name" value="MAJOR FACILITATOR SUPERFAMILY PROTEIN"/>
    <property type="match status" value="1"/>
</dbReference>
<dbReference type="PANTHER" id="PTHR23534">
    <property type="entry name" value="MFS PERMEASE"/>
    <property type="match status" value="1"/>
</dbReference>
<dbReference type="Pfam" id="PF07690">
    <property type="entry name" value="MFS_1"/>
    <property type="match status" value="1"/>
</dbReference>
<dbReference type="SUPFAM" id="SSF103473">
    <property type="entry name" value="MFS general substrate transporter"/>
    <property type="match status" value="1"/>
</dbReference>
<dbReference type="PROSITE" id="PS50850">
    <property type="entry name" value="MFS"/>
    <property type="match status" value="1"/>
</dbReference>
<organism>
    <name type="scientific">Bacillus subtilis (strain 168)</name>
    <dbReference type="NCBI Taxonomy" id="224308"/>
    <lineage>
        <taxon>Bacteria</taxon>
        <taxon>Bacillati</taxon>
        <taxon>Bacillota</taxon>
        <taxon>Bacilli</taxon>
        <taxon>Bacillales</taxon>
        <taxon>Bacillaceae</taxon>
        <taxon>Bacillus</taxon>
    </lineage>
</organism>
<name>YDEG_BACSU</name>
<proteinExistence type="inferred from homology"/>